<accession>Q9H1H9</accession>
<accession>A0JP21</accession>
<accession>A0JP22</accession>
<accession>F2Z382</accession>
<accession>Q5THQ2</accession>
<accession>Q5THQ3</accession>
<accession>Q9H193</accession>
<accession>Q9H194</accession>
<accession>Q9H1H8</accession>
<sequence length="1805" mass="202308">MSDTKVKVAVRVRPMNRRELELNTKCVVEMEGNQTVLHPPPSNTKQGERKPPKVFAFDYCFWSMDESNTTKYAGQEVVFKCLGEGILEKAFQGYNACIFAYGQTGSGKSFSMMGHAEQLGLIPRLCCALFKRISLEQNESQTFKVEVSYMEIYNEKVRDLLDPKGSRQSLKVREHKVLGPYVDGLSQLAVTSFEDIESLMSEGNKSRTVAATNMNEESSRSHAVFNIIITQTLYDLQSGNSGEKVSKVSLVDLAGSERVSKTGAAGERLKEGSNINKSLTTLGLVISSLADQAAGKGKSKFVPYRDSVLTWLLKDNLGGNSQTSMIATISPAADNYEETLSTLRYADRAKRIVNHAVVNEDPNAKVIRELREEVEKLREQLSQAEAMKAPELKEKLEESEKLIKELTVTWEEKLRKTEEIAQERQRQLESMGISLEMSGIKVGDDKCYLVNLNADPALNELLVYYLKDHTRVGADTSQDIQLFGIGIQPQHCEIDIASDGDVTLTPKENARSCVNGTLVCSTTQLWHGDRILWGNNHFFRINLPKRKRRDWLKDFEKETGPPEHDLDAASEASSEPDYNYEFAQMEVIMKTLNSNDPVQNVVQVLEKQYLEEKRSALEEQRLMYERELEQLRQQLSPDRQPQSSGPDRLAYSSQTAQQKVTQWAEERDELFRQSLAKLREQLVKANTLVREANFLAEEMSKLTDYQVTLQIPAANLSANRKRGAIVSEPAIQVRRKGKSTQVWTIEKLENKLIDMRDLYQEWKEKVPEAKRLYGKRGDPFYEAQENHNLIGVANVFLECLFCDVKLQYAVPIISQQGEVAGRLHVEVMRVTGAVPERVVEDDSSENSSESGSLEVVDSSGEIIHRVKKLTCRVKIKEATGLPLNLSNFVFCQYTFWDQCESTVAAPVVDPEVPSPQSKDAQYTVTFSHCKDYVVNVTEEFLEFISDGALAIEVWGHRCAGNGSSIWEVDSLHAKTRTLHDRWNEVTRRIEMWISILELNELGEYAAVELHQAKDVNTGGIFQLRQGHSRRVQVTVKPVQHSGTLPLMVEAILSVSIGCVTARSTKLQRGLDSYQRDDEDGDDMDSYQEEDLNCVRERWSDALIKRREYLDEQIKKVSNKTEKTEDDVEREAQLVEQWVGLTEERNAVLVPAPGSGIPGAPADWIPPPGMETHIPVLFLDLNADDLSANEQLVGPHASGVNSILPKEHGSQFFYLPIIKHSDDEVSATASWDSSVHDSVHLNRVTPQNERIYLIVKTTVQLSHPAAMELVLRKRIAANIYNKQSFTQSLKRRISLKNIFYSCGVTYEIVSNIPKATEEIEDRETLALLAARSENEGTSDGETYIEKYTRGVLQVENILSLERLRQAVTVKEALSTKARHIRRSLSTPNVHNVSSSRPDLSGFDEDDKGWPENQLDMSDYSSSYQDVACYGTLPRDSPRRNKEGCTSETPHALTVSPFKAFSPQPPKFFKPLMPVKEEHKKRIALEARPLLSQESMPPPQAHNPGCIVPSGSNGSSMPVEHNSKREKKIDSEEEENELEAINRKLISSQPYVPVEFADFSVYNASLENREWFSSKVDLSNSRVLEKEVSRSPTTSSITSGYFSHSASNATLSDMVVPSSDSSDQLAIQTKDADSTEHSTPSLVHDFRPSSNKELTEVEKGLVKDKIIVVPLKENSALAKGSPSSQSIPEKNSKSLCRTGSCSELDACPSKISQPARGFCPREVTVEHTTNILEDHSFTEFMGVSEGKDFDGLTDSSAGELSSRRSLPNKTGGKTVSDGLHHPSQLHSKLENDQVIIPEAAFWVLCCQ</sequence>
<name>KI13A_HUMAN</name>
<proteinExistence type="evidence at protein level"/>
<organism>
    <name type="scientific">Homo sapiens</name>
    <name type="common">Human</name>
    <dbReference type="NCBI Taxonomy" id="9606"/>
    <lineage>
        <taxon>Eukaryota</taxon>
        <taxon>Metazoa</taxon>
        <taxon>Chordata</taxon>
        <taxon>Craniata</taxon>
        <taxon>Vertebrata</taxon>
        <taxon>Euteleostomi</taxon>
        <taxon>Mammalia</taxon>
        <taxon>Eutheria</taxon>
        <taxon>Euarchontoglires</taxon>
        <taxon>Primates</taxon>
        <taxon>Haplorrhini</taxon>
        <taxon>Catarrhini</taxon>
        <taxon>Hominidae</taxon>
        <taxon>Homo</taxon>
    </lineage>
</organism>
<reference key="1">
    <citation type="journal article" date="2001" name="Genomics">
        <title>Identification of the human KIF13A gene homologous to Drosophila kinesin-73 and candidate for schizophrenia.</title>
        <authorList>
            <person name="Jamain S."/>
            <person name="Quach H."/>
            <person name="Fellous M."/>
            <person name="Bourgeron T."/>
        </authorList>
    </citation>
    <scope>NUCLEOTIDE SEQUENCE [MRNA] (ISOFORMS 3 AND 4)</scope>
    <scope>TISSUE SPECIFICITY</scope>
    <source>
        <tissue>Fetal brain</tissue>
    </source>
</reference>
<reference key="2">
    <citation type="journal article" date="2002" name="Cancer Res.">
        <title>Genomic amplification in retinoblastoma narrowed to 0.6 megabase on chromosome 6p containing a kinesin-like gene, RBKIN.</title>
        <authorList>
            <person name="Chen D."/>
            <person name="Pajovic S."/>
            <person name="Duckett A."/>
            <person name="Brown V.D."/>
            <person name="Squire J.A."/>
            <person name="Gallie B.L."/>
        </authorList>
    </citation>
    <scope>NUCLEOTIDE SEQUENCE [MRNA] (ISOFORMS 1 AND 2)</scope>
    <scope>TISSUE SPECIFICITY</scope>
    <scope>DEVELOPMENTAL STAGE</scope>
    <source>
        <tissue>Retina</tissue>
    </source>
</reference>
<reference key="3">
    <citation type="journal article" date="2003" name="Nature">
        <title>The DNA sequence and analysis of human chromosome 6.</title>
        <authorList>
            <person name="Mungall A.J."/>
            <person name="Palmer S.A."/>
            <person name="Sims S.K."/>
            <person name="Edwards C.A."/>
            <person name="Ashurst J.L."/>
            <person name="Wilming L."/>
            <person name="Jones M.C."/>
            <person name="Horton R."/>
            <person name="Hunt S.E."/>
            <person name="Scott C.E."/>
            <person name="Gilbert J.G.R."/>
            <person name="Clamp M.E."/>
            <person name="Bethel G."/>
            <person name="Milne S."/>
            <person name="Ainscough R."/>
            <person name="Almeida J.P."/>
            <person name="Ambrose K.D."/>
            <person name="Andrews T.D."/>
            <person name="Ashwell R.I.S."/>
            <person name="Babbage A.K."/>
            <person name="Bagguley C.L."/>
            <person name="Bailey J."/>
            <person name="Banerjee R."/>
            <person name="Barker D.J."/>
            <person name="Barlow K.F."/>
            <person name="Bates K."/>
            <person name="Beare D.M."/>
            <person name="Beasley H."/>
            <person name="Beasley O."/>
            <person name="Bird C.P."/>
            <person name="Blakey S.E."/>
            <person name="Bray-Allen S."/>
            <person name="Brook J."/>
            <person name="Brown A.J."/>
            <person name="Brown J.Y."/>
            <person name="Burford D.C."/>
            <person name="Burrill W."/>
            <person name="Burton J."/>
            <person name="Carder C."/>
            <person name="Carter N.P."/>
            <person name="Chapman J.C."/>
            <person name="Clark S.Y."/>
            <person name="Clark G."/>
            <person name="Clee C.M."/>
            <person name="Clegg S."/>
            <person name="Cobley V."/>
            <person name="Collier R.E."/>
            <person name="Collins J.E."/>
            <person name="Colman L.K."/>
            <person name="Corby N.R."/>
            <person name="Coville G.J."/>
            <person name="Culley K.M."/>
            <person name="Dhami P."/>
            <person name="Davies J."/>
            <person name="Dunn M."/>
            <person name="Earthrowl M.E."/>
            <person name="Ellington A.E."/>
            <person name="Evans K.A."/>
            <person name="Faulkner L."/>
            <person name="Francis M.D."/>
            <person name="Frankish A."/>
            <person name="Frankland J."/>
            <person name="French L."/>
            <person name="Garner P."/>
            <person name="Garnett J."/>
            <person name="Ghori M.J."/>
            <person name="Gilby L.M."/>
            <person name="Gillson C.J."/>
            <person name="Glithero R.J."/>
            <person name="Grafham D.V."/>
            <person name="Grant M."/>
            <person name="Gribble S."/>
            <person name="Griffiths C."/>
            <person name="Griffiths M.N.D."/>
            <person name="Hall R."/>
            <person name="Halls K.S."/>
            <person name="Hammond S."/>
            <person name="Harley J.L."/>
            <person name="Hart E.A."/>
            <person name="Heath P.D."/>
            <person name="Heathcott R."/>
            <person name="Holmes S.J."/>
            <person name="Howden P.J."/>
            <person name="Howe K.L."/>
            <person name="Howell G.R."/>
            <person name="Huckle E."/>
            <person name="Humphray S.J."/>
            <person name="Humphries M.D."/>
            <person name="Hunt A.R."/>
            <person name="Johnson C.M."/>
            <person name="Joy A.A."/>
            <person name="Kay M."/>
            <person name="Keenan S.J."/>
            <person name="Kimberley A.M."/>
            <person name="King A."/>
            <person name="Laird G.K."/>
            <person name="Langford C."/>
            <person name="Lawlor S."/>
            <person name="Leongamornlert D.A."/>
            <person name="Leversha M."/>
            <person name="Lloyd C.R."/>
            <person name="Lloyd D.M."/>
            <person name="Loveland J.E."/>
            <person name="Lovell J."/>
            <person name="Martin S."/>
            <person name="Mashreghi-Mohammadi M."/>
            <person name="Maslen G.L."/>
            <person name="Matthews L."/>
            <person name="McCann O.T."/>
            <person name="McLaren S.J."/>
            <person name="McLay K."/>
            <person name="McMurray A."/>
            <person name="Moore M.J.F."/>
            <person name="Mullikin J.C."/>
            <person name="Niblett D."/>
            <person name="Nickerson T."/>
            <person name="Novik K.L."/>
            <person name="Oliver K."/>
            <person name="Overton-Larty E.K."/>
            <person name="Parker A."/>
            <person name="Patel R."/>
            <person name="Pearce A.V."/>
            <person name="Peck A.I."/>
            <person name="Phillimore B.J.C.T."/>
            <person name="Phillips S."/>
            <person name="Plumb R.W."/>
            <person name="Porter K.M."/>
            <person name="Ramsey Y."/>
            <person name="Ranby S.A."/>
            <person name="Rice C.M."/>
            <person name="Ross M.T."/>
            <person name="Searle S.M."/>
            <person name="Sehra H.K."/>
            <person name="Sheridan E."/>
            <person name="Skuce C.D."/>
            <person name="Smith S."/>
            <person name="Smith M."/>
            <person name="Spraggon L."/>
            <person name="Squares S.L."/>
            <person name="Steward C.A."/>
            <person name="Sycamore N."/>
            <person name="Tamlyn-Hall G."/>
            <person name="Tester J."/>
            <person name="Theaker A.J."/>
            <person name="Thomas D.W."/>
            <person name="Thorpe A."/>
            <person name="Tracey A."/>
            <person name="Tromans A."/>
            <person name="Tubby B."/>
            <person name="Wall M."/>
            <person name="Wallis J.M."/>
            <person name="West A.P."/>
            <person name="White S.S."/>
            <person name="Whitehead S.L."/>
            <person name="Whittaker H."/>
            <person name="Wild A."/>
            <person name="Willey D.J."/>
            <person name="Wilmer T.E."/>
            <person name="Wood J.M."/>
            <person name="Wray P.W."/>
            <person name="Wyatt J.C."/>
            <person name="Young L."/>
            <person name="Younger R.M."/>
            <person name="Bentley D.R."/>
            <person name="Coulson A."/>
            <person name="Durbin R.M."/>
            <person name="Hubbard T."/>
            <person name="Sulston J.E."/>
            <person name="Dunham I."/>
            <person name="Rogers J."/>
            <person name="Beck S."/>
        </authorList>
    </citation>
    <scope>NUCLEOTIDE SEQUENCE [LARGE SCALE GENOMIC DNA]</scope>
</reference>
<reference key="4">
    <citation type="journal article" date="2004" name="Genome Res.">
        <title>The status, quality, and expansion of the NIH full-length cDNA project: the Mammalian Gene Collection (MGC).</title>
        <authorList>
            <consortium name="The MGC Project Team"/>
        </authorList>
    </citation>
    <scope>NUCLEOTIDE SEQUENCE [LARGE SCALE MRNA] (ISOFORMS 2; 4 AND 5)</scope>
    <source>
        <tissue>Glioblastoma</tissue>
    </source>
</reference>
<reference key="5">
    <citation type="journal article" date="2008" name="Proc. Natl. Acad. Sci. U.S.A.">
        <title>A quantitative atlas of mitotic phosphorylation.</title>
        <authorList>
            <person name="Dephoure N."/>
            <person name="Zhou C."/>
            <person name="Villen J."/>
            <person name="Beausoleil S.A."/>
            <person name="Bakalarski C.E."/>
            <person name="Elledge S.J."/>
            <person name="Gygi S.P."/>
        </authorList>
    </citation>
    <scope>IDENTIFICATION BY MASS SPECTROMETRY [LARGE SCALE ANALYSIS]</scope>
    <source>
        <tissue>Cervix carcinoma</tissue>
    </source>
</reference>
<reference key="6">
    <citation type="journal article" date="2009" name="Anal. Chem.">
        <title>Lys-N and trypsin cover complementary parts of the phosphoproteome in a refined SCX-based approach.</title>
        <authorList>
            <person name="Gauci S."/>
            <person name="Helbig A.O."/>
            <person name="Slijper M."/>
            <person name="Krijgsveld J."/>
            <person name="Heck A.J."/>
            <person name="Mohammed S."/>
        </authorList>
    </citation>
    <scope>IDENTIFICATION BY MASS SPECTROMETRY [LARGE SCALE ANALYSIS]</scope>
</reference>
<reference key="7">
    <citation type="journal article" date="2009" name="J. Cell Biol.">
        <title>AP-1 and KIF13A coordinate endosomal sorting and positioning during melanosome biogenesis.</title>
        <authorList>
            <person name="Delevoye C."/>
            <person name="Hurbain I."/>
            <person name="Tenza D."/>
            <person name="Sibarita J.B."/>
            <person name="Uzan-Gafsou S."/>
            <person name="Ohno H."/>
            <person name="Geerts W.J."/>
            <person name="Verkleij A.J."/>
            <person name="Salamero J."/>
            <person name="Marks M.S."/>
            <person name="Raposo G."/>
        </authorList>
    </citation>
    <scope>FUNCTION</scope>
    <scope>INTERACTION WITH AP1G1 AND AP1G2</scope>
    <scope>SUBCELLULAR LOCATION</scope>
</reference>
<reference key="8">
    <citation type="journal article" date="2010" name="Nat. Cell Biol.">
        <title>PtdIns(3)P controls cytokinesis through KIF13A-mediated recruitment of FYVE-CENT to the midbody.</title>
        <authorList>
            <person name="Sagona A.P."/>
            <person name="Nezis I.P."/>
            <person name="Pedersen N.M."/>
            <person name="Liestol K."/>
            <person name="Poulton J."/>
            <person name="Rusten T.E."/>
            <person name="Skotheim R.I."/>
            <person name="Raiborg C."/>
            <person name="Stenmark H."/>
        </authorList>
    </citation>
    <scope>FUNCTION</scope>
    <scope>SUBCELLULAR LOCATION</scope>
    <scope>INTERACTION WITH ZFYVE26</scope>
</reference>
<reference key="9">
    <citation type="journal article" date="2010" name="Sci. Signal.">
        <title>Quantitative phosphoproteomics reveals widespread full phosphorylation site occupancy during mitosis.</title>
        <authorList>
            <person name="Olsen J.V."/>
            <person name="Vermeulen M."/>
            <person name="Santamaria A."/>
            <person name="Kumar C."/>
            <person name="Miller M.L."/>
            <person name="Jensen L.J."/>
            <person name="Gnad F."/>
            <person name="Cox J."/>
            <person name="Jensen T.S."/>
            <person name="Nigg E.A."/>
            <person name="Brunak S."/>
            <person name="Mann M."/>
        </authorList>
    </citation>
    <scope>PHOSPHORYLATION [LARGE SCALE ANALYSIS] AT SER-1287</scope>
    <scope>IDENTIFICATION BY MASS SPECTROMETRY [LARGE SCALE ANALYSIS]</scope>
    <source>
        <tissue>Cervix carcinoma</tissue>
    </source>
</reference>
<reference key="10">
    <citation type="journal article" date="2011" name="BMC Syst. Biol.">
        <title>Initial characterization of the human central proteome.</title>
        <authorList>
            <person name="Burkard T.R."/>
            <person name="Planyavsky M."/>
            <person name="Kaupe I."/>
            <person name="Breitwieser F.P."/>
            <person name="Buerckstuemmer T."/>
            <person name="Bennett K.L."/>
            <person name="Superti-Furga G."/>
            <person name="Colinge J."/>
        </authorList>
    </citation>
    <scope>IDENTIFICATION BY MASS SPECTROMETRY [LARGE SCALE ANALYSIS]</scope>
</reference>
<reference key="11">
    <citation type="journal article" date="2013" name="J. Proteome Res.">
        <title>Toward a comprehensive characterization of a human cancer cell phosphoproteome.</title>
        <authorList>
            <person name="Zhou H."/>
            <person name="Di Palma S."/>
            <person name="Preisinger C."/>
            <person name="Peng M."/>
            <person name="Polat A.N."/>
            <person name="Heck A.J."/>
            <person name="Mohammed S."/>
        </authorList>
    </citation>
    <scope>PHOSPHORYLATION [LARGE SCALE ANALYSIS] AT SER-636; SER-1454; SER-1529; SER-1572 AND SER-1698</scope>
    <scope>IDENTIFICATION BY MASS SPECTROMETRY [LARGE SCALE ANALYSIS]</scope>
    <source>
        <tissue>Cervix carcinoma</tissue>
        <tissue>Erythroleukemia</tissue>
    </source>
</reference>
<reference key="12">
    <citation type="journal article" date="2014" name="J. Proteomics">
        <title>An enzyme assisted RP-RPLC approach for in-depth analysis of human liver phosphoproteome.</title>
        <authorList>
            <person name="Bian Y."/>
            <person name="Song C."/>
            <person name="Cheng K."/>
            <person name="Dong M."/>
            <person name="Wang F."/>
            <person name="Huang J."/>
            <person name="Sun D."/>
            <person name="Wang L."/>
            <person name="Ye M."/>
            <person name="Zou H."/>
        </authorList>
    </citation>
    <scope>PHOSPHORYLATION [LARGE SCALE ANALYSIS] AT SER-1494 (ISOFORM 2)</scope>
    <scope>PHOSPHORYLATION [LARGE SCALE ANALYSIS] AT SER-1481 (ISOFORMS 3 AND 4)</scope>
    <scope>IDENTIFICATION BY MASS SPECTROMETRY [LARGE SCALE ANALYSIS]</scope>
    <source>
        <tissue>Liver</tissue>
    </source>
</reference>
<gene>
    <name type="primary">KIF13A</name>
    <name type="synonym">RBKIN</name>
</gene>
<comment type="function">
    <text evidence="8 9">Plus end-directed microtubule-dependent motor protein involved in intracellular transport and regulating various processes such as mannose-6-phosphate receptor (M6PR) transport to the plasma membrane, endosomal sorting during melanosome biogenesis and cytokinesis. Mediates the transport of M6PR-containing vesicles from trans-Golgi network to the plasma membrane via direct interaction with the AP-1 complex. During melanosome maturation, required for delivering melanogenic enzymes from recycling endosomes to nascent melanosomes by creating peripheral recycling endosomal subdomains in melanocytes. Also required for the abscission step in cytokinesis: mediates translocation of ZFYVE26, and possibly TTC19, to the midbody during cytokinesis.</text>
</comment>
<comment type="subunit">
    <text evidence="1 8 9">Interacts with AP2B1 (By similarity). Interacts with ZFYVE26. Interacts with AP1G1 and AP1G2.</text>
</comment>
<comment type="interaction">
    <interactant intactId="EBI-1759129">
        <id>Q9H1H9</id>
    </interactant>
    <interactant intactId="EBI-10239299">
        <id>Q9NQM4</id>
        <label>DNAAF6</label>
    </interactant>
    <organismsDiffer>false</organismsDiffer>
    <experiments>3</experiments>
</comment>
<comment type="interaction">
    <interactant intactId="EBI-12216695">
        <id>Q9H1H9-2</id>
    </interactant>
    <interactant intactId="EBI-11978055">
        <id>Q10567-3</id>
        <label>AP1B1</label>
    </interactant>
    <organismsDiffer>false</organismsDiffer>
    <experiments>3</experiments>
</comment>
<comment type="interaction">
    <interactant intactId="EBI-12216695">
        <id>Q9H1H9-2</id>
    </interactant>
    <interactant intactId="EBI-50433196">
        <id>A0A6Q8PF08</id>
        <label>PMP22</label>
    </interactant>
    <organismsDiffer>false</organismsDiffer>
    <experiments>3</experiments>
</comment>
<comment type="subcellular location">
    <subcellularLocation>
        <location>Cytoplasm</location>
        <location>Cytoskeleton</location>
        <location>Microtubule organizing center</location>
        <location>Centrosome</location>
    </subcellularLocation>
    <subcellularLocation>
        <location>Midbody</location>
    </subcellularLocation>
    <subcellularLocation>
        <location>Endosome membrane</location>
    </subcellularLocation>
    <subcellularLocation>
        <location evidence="1">Golgi apparatus membrane</location>
    </subcellularLocation>
    <text>Recruited to the midbody during cytokinesis.</text>
</comment>
<comment type="alternative products">
    <event type="alternative splicing"/>
    <isoform>
        <id>Q9H1H9-1</id>
        <name>1</name>
        <name>RBKIN1</name>
        <sequence type="displayed"/>
    </isoform>
    <isoform>
        <id>Q9H1H9-2</id>
        <name>2</name>
        <name>RBKIN2</name>
        <sequence type="described" ref="VSP_002870"/>
    </isoform>
    <isoform>
        <id>Q9H1H9-3</id>
        <name>3</name>
        <sequence type="described" ref="VSP_021724 VSP_002870 VSP_021725 VSP_021726"/>
    </isoform>
    <isoform>
        <id>Q9H1H9-4</id>
        <name>4</name>
        <sequence type="described" ref="VSP_021724 VSP_002870"/>
    </isoform>
    <isoform>
        <id>Q9H1H9-5</id>
        <name>5</name>
        <sequence type="described" ref="VSP_045584 VSP_045585"/>
    </isoform>
</comment>
<comment type="tissue specificity">
    <text evidence="6 7">Widely expressed, with highest levels in heart, brain and skeletal muscle.</text>
</comment>
<comment type="developmental stage">
    <text evidence="7">Expressed at very low level in most fetal tissues, but at higher levels in skeletal muscle and lung.</text>
</comment>
<comment type="similarity">
    <text evidence="4">Belongs to the TRAFAC class myosin-kinesin ATPase superfamily. Kinesin family.</text>
</comment>
<feature type="chain" id="PRO_0000125446" description="Kinesin-like protein KIF13A">
    <location>
        <begin position="1"/>
        <end position="1805"/>
    </location>
</feature>
<feature type="domain" description="Kinesin motor" evidence="4">
    <location>
        <begin position="5"/>
        <end position="352"/>
    </location>
</feature>
<feature type="domain" description="FHA">
    <location>
        <begin position="469"/>
        <end position="519"/>
    </location>
</feature>
<feature type="region of interest" description="Disordered" evidence="5">
    <location>
        <begin position="556"/>
        <end position="575"/>
    </location>
</feature>
<feature type="region of interest" description="Disordered" evidence="5">
    <location>
        <begin position="633"/>
        <end position="656"/>
    </location>
</feature>
<feature type="region of interest" description="Disordered" evidence="5">
    <location>
        <begin position="1385"/>
        <end position="1404"/>
    </location>
</feature>
<feature type="region of interest" description="Disordered" evidence="5">
    <location>
        <begin position="1507"/>
        <end position="1531"/>
    </location>
</feature>
<feature type="region of interest" description="Disordered" evidence="5">
    <location>
        <begin position="1612"/>
        <end position="1645"/>
    </location>
</feature>
<feature type="region of interest" description="Disordered" evidence="5">
    <location>
        <begin position="1749"/>
        <end position="1779"/>
    </location>
</feature>
<feature type="coiled-coil region" evidence="3">
    <location>
        <begin position="359"/>
        <end position="436"/>
    </location>
</feature>
<feature type="coiled-coil region" evidence="3">
    <location>
        <begin position="602"/>
        <end position="775"/>
    </location>
</feature>
<feature type="coiled-coil region" evidence="3">
    <location>
        <begin position="1100"/>
        <end position="1138"/>
    </location>
</feature>
<feature type="coiled-coil region" evidence="3">
    <location>
        <begin position="1518"/>
        <end position="1547"/>
    </location>
</feature>
<feature type="compositionally biased region" description="Basic and acidic residues" evidence="5">
    <location>
        <begin position="556"/>
        <end position="567"/>
    </location>
</feature>
<feature type="compositionally biased region" description="Polar residues" evidence="5">
    <location>
        <begin position="1385"/>
        <end position="1396"/>
    </location>
</feature>
<feature type="compositionally biased region" description="Basic and acidic residues" evidence="5">
    <location>
        <begin position="1519"/>
        <end position="1528"/>
    </location>
</feature>
<feature type="compositionally biased region" description="Low complexity" evidence="5">
    <location>
        <begin position="1612"/>
        <end position="1621"/>
    </location>
</feature>
<feature type="compositionally biased region" description="Polar residues" evidence="5">
    <location>
        <begin position="1751"/>
        <end position="1771"/>
    </location>
</feature>
<feature type="binding site" evidence="4">
    <location>
        <begin position="102"/>
        <end position="109"/>
    </location>
    <ligand>
        <name>ATP</name>
        <dbReference type="ChEBI" id="CHEBI:30616"/>
    </ligand>
</feature>
<feature type="modified residue" description="Phosphoserine" evidence="15">
    <location>
        <position position="636"/>
    </location>
</feature>
<feature type="modified residue" description="Phosphoserine" evidence="14">
    <location>
        <position position="1287"/>
    </location>
</feature>
<feature type="modified residue" description="Phosphoserine" evidence="15">
    <location>
        <position position="1454"/>
    </location>
</feature>
<feature type="modified residue" description="Phosphoserine" evidence="2">
    <location>
        <position position="1490"/>
    </location>
</feature>
<feature type="modified residue" description="Phosphoserine" evidence="15">
    <location>
        <position position="1529"/>
    </location>
</feature>
<feature type="modified residue" description="Phosphoserine" evidence="15">
    <location>
        <position position="1572"/>
    </location>
</feature>
<feature type="modified residue" description="Phosphoserine" evidence="2">
    <location>
        <position position="1648"/>
    </location>
</feature>
<feature type="modified residue" description="Phosphoserine" evidence="15">
    <location>
        <position position="1698"/>
    </location>
</feature>
<feature type="splice variant" id="VSP_045584" description="In isoform 5." evidence="12">
    <original>KPPKVFAFDYCFWSMDESNTT</original>
    <variation>LVTVAHISNSSTLGGQGKRIT</variation>
    <location>
        <begin position="50"/>
        <end position="70"/>
    </location>
</feature>
<feature type="splice variant" id="VSP_045585" description="In isoform 5." evidence="12">
    <location>
        <begin position="71"/>
        <end position="1805"/>
    </location>
</feature>
<feature type="splice variant" id="VSP_021724" description="In isoform 3 and isoform 4." evidence="10 12">
    <location>
        <begin position="1071"/>
        <end position="1083"/>
    </location>
</feature>
<feature type="splice variant" id="VSP_002870" description="In isoform 2, isoform 3 and isoform 4." evidence="10 11 12">
    <location>
        <begin position="1493"/>
        <end position="1527"/>
    </location>
</feature>
<feature type="splice variant" id="VSP_021725" description="In isoform 3." evidence="10">
    <original>VIIPEA</original>
    <variation>GGTTSR</variation>
    <location>
        <begin position="1792"/>
        <end position="1797"/>
    </location>
</feature>
<feature type="splice variant" id="VSP_021726" description="In isoform 3." evidence="10">
    <location>
        <begin position="1798"/>
        <end position="1805"/>
    </location>
</feature>
<feature type="sequence variant" id="VAR_029389" description="In dbSNP:rs17689215.">
    <original>M</original>
    <variation>V</variation>
    <location>
        <position position="1415"/>
    </location>
</feature>
<feature type="sequence variant" id="VAR_049699" description="In dbSNP:rs12211658.">
    <original>F</original>
    <variation>S</variation>
    <location>
        <position position="1600"/>
    </location>
</feature>
<feature type="sequence conflict" description="In Ref. 2; AAG38890/AAG38891." evidence="13" ref="2">
    <original>S</original>
    <variation>G</variation>
    <location>
        <position position="674"/>
    </location>
</feature>
<feature type="sequence conflict" description="In Ref. 2; AAG38890/AAG38891." evidence="13" ref="2">
    <original>T</original>
    <variation>A</variation>
    <location>
        <position position="925"/>
    </location>
</feature>
<feature type="sequence conflict" description="In Ref. 2; AAG38890/AAG38891." evidence="13" ref="2">
    <original>L</original>
    <variation>P</variation>
    <location>
        <position position="1185"/>
    </location>
</feature>
<feature type="sequence conflict" description="In Ref. 2; AAG38890." evidence="13" ref="2">
    <original>S</original>
    <variation>N</variation>
    <location>
        <position position="1521"/>
    </location>
</feature>
<feature type="modified residue" description="Phosphoserine" evidence="16">
    <location sequence="Q9H1H9-2">
        <position position="1494"/>
    </location>
</feature>
<feature type="modified residue" description="Phosphoserine" evidence="16">
    <location sequence="Q9H1H9-3">
        <position position="1481"/>
    </location>
</feature>
<feature type="modified residue" description="Phosphoserine" evidence="16">
    <location sequence="Q9H1H9-4">
        <position position="1481"/>
    </location>
</feature>
<protein>
    <recommendedName>
        <fullName>Kinesin-like protein KIF13A</fullName>
    </recommendedName>
    <alternativeName>
        <fullName>Kinesin-like protein RBKIN</fullName>
    </alternativeName>
</protein>
<dbReference type="EMBL" id="AJ291578">
    <property type="protein sequence ID" value="CAC20442.1"/>
    <property type="molecule type" value="mRNA"/>
</dbReference>
<dbReference type="EMBL" id="AJ291579">
    <property type="protein sequence ID" value="CAC20443.1"/>
    <property type="molecule type" value="mRNA"/>
</dbReference>
<dbReference type="EMBL" id="AY014403">
    <property type="protein sequence ID" value="AAG38890.1"/>
    <property type="molecule type" value="mRNA"/>
</dbReference>
<dbReference type="EMBL" id="AY014404">
    <property type="protein sequence ID" value="AAG38891.1"/>
    <property type="molecule type" value="mRNA"/>
</dbReference>
<dbReference type="EMBL" id="AL023807">
    <property type="status" value="NOT_ANNOTATED_CDS"/>
    <property type="molecule type" value="Genomic_DNA"/>
</dbReference>
<dbReference type="EMBL" id="AL138724">
    <property type="status" value="NOT_ANNOTATED_CDS"/>
    <property type="molecule type" value="Genomic_DNA"/>
</dbReference>
<dbReference type="EMBL" id="BC062673">
    <property type="status" value="NOT_ANNOTATED_CDS"/>
    <property type="molecule type" value="mRNA"/>
</dbReference>
<dbReference type="EMBL" id="BC127115">
    <property type="protein sequence ID" value="AAI27116.1"/>
    <property type="molecule type" value="mRNA"/>
</dbReference>
<dbReference type="EMBL" id="BC127116">
    <property type="protein sequence ID" value="AAI27117.1"/>
    <property type="molecule type" value="mRNA"/>
</dbReference>
<dbReference type="CCDS" id="CCDS47380.1">
    <molecule id="Q9H1H9-3"/>
</dbReference>
<dbReference type="CCDS" id="CCDS47381.1">
    <molecule id="Q9H1H9-1"/>
</dbReference>
<dbReference type="CCDS" id="CCDS54967.1">
    <molecule id="Q9H1H9-4"/>
</dbReference>
<dbReference type="CCDS" id="CCDS54968.1">
    <molecule id="Q9H1H9-2"/>
</dbReference>
<dbReference type="CCDS" id="CCDS58998.1">
    <molecule id="Q9H1H9-5"/>
</dbReference>
<dbReference type="RefSeq" id="NP_001099036.1">
    <molecule id="Q9H1H9-2"/>
    <property type="nucleotide sequence ID" value="NM_001105566.3"/>
</dbReference>
<dbReference type="RefSeq" id="NP_001099037.1">
    <molecule id="Q9H1H9-4"/>
    <property type="nucleotide sequence ID" value="NM_001105567.3"/>
</dbReference>
<dbReference type="RefSeq" id="NP_001099038.1">
    <molecule id="Q9H1H9-3"/>
    <property type="nucleotide sequence ID" value="NM_001105568.4"/>
</dbReference>
<dbReference type="RefSeq" id="NP_001230352.1">
    <molecule id="Q9H1H9-5"/>
    <property type="nucleotide sequence ID" value="NM_001243423.2"/>
</dbReference>
<dbReference type="RefSeq" id="NP_071396.4">
    <molecule id="Q9H1H9-1"/>
    <property type="nucleotide sequence ID" value="NM_022113.5"/>
</dbReference>
<dbReference type="SMR" id="Q9H1H9"/>
<dbReference type="BioGRID" id="122019">
    <property type="interactions" value="37"/>
</dbReference>
<dbReference type="DIP" id="DIP-52276N"/>
<dbReference type="FunCoup" id="Q9H1H9">
    <property type="interactions" value="518"/>
</dbReference>
<dbReference type="IntAct" id="Q9H1H9">
    <property type="interactions" value="25"/>
</dbReference>
<dbReference type="MINT" id="Q9H1H9"/>
<dbReference type="STRING" id="9606.ENSP00000259711"/>
<dbReference type="GlyGen" id="Q9H1H9">
    <property type="glycosylation" value="2 sites, 1 O-linked glycan (2 sites)"/>
</dbReference>
<dbReference type="iPTMnet" id="Q9H1H9"/>
<dbReference type="PhosphoSitePlus" id="Q9H1H9"/>
<dbReference type="BioMuta" id="KIF13A"/>
<dbReference type="DMDM" id="118572662"/>
<dbReference type="jPOST" id="Q9H1H9"/>
<dbReference type="MassIVE" id="Q9H1H9"/>
<dbReference type="PaxDb" id="9606-ENSP00000259711"/>
<dbReference type="PeptideAtlas" id="Q9H1H9"/>
<dbReference type="ProteomicsDB" id="23911"/>
<dbReference type="ProteomicsDB" id="80409">
    <molecule id="Q9H1H9-1"/>
</dbReference>
<dbReference type="ProteomicsDB" id="80410">
    <molecule id="Q9H1H9-2"/>
</dbReference>
<dbReference type="ProteomicsDB" id="80411">
    <molecule id="Q9H1H9-3"/>
</dbReference>
<dbReference type="ProteomicsDB" id="80412">
    <molecule id="Q9H1H9-4"/>
</dbReference>
<dbReference type="Pumba" id="Q9H1H9"/>
<dbReference type="Antibodypedia" id="25117">
    <property type="antibodies" value="80 antibodies from 19 providers"/>
</dbReference>
<dbReference type="DNASU" id="63971"/>
<dbReference type="Ensembl" id="ENST00000259711.11">
    <molecule id="Q9H1H9-1"/>
    <property type="protein sequence ID" value="ENSP00000259711.6"/>
    <property type="gene ID" value="ENSG00000137177.20"/>
</dbReference>
<dbReference type="Ensembl" id="ENST00000378814.9">
    <molecule id="Q9H1H9-3"/>
    <property type="protein sequence ID" value="ENSP00000368091.5"/>
    <property type="gene ID" value="ENSG00000137177.20"/>
</dbReference>
<dbReference type="Ensembl" id="ENST00000378826.6">
    <molecule id="Q9H1H9-2"/>
    <property type="protein sequence ID" value="ENSP00000368103.2"/>
    <property type="gene ID" value="ENSG00000137177.20"/>
</dbReference>
<dbReference type="Ensembl" id="ENST00000378843.6">
    <molecule id="Q9H1H9-4"/>
    <property type="protein sequence ID" value="ENSP00000368120.2"/>
    <property type="gene ID" value="ENSG00000137177.20"/>
</dbReference>
<dbReference type="Ensembl" id="ENST00000502704.2">
    <molecule id="Q9H1H9-5"/>
    <property type="protein sequence ID" value="ENSP00000425453.1"/>
    <property type="gene ID" value="ENSG00000137177.20"/>
</dbReference>
<dbReference type="GeneID" id="63971"/>
<dbReference type="KEGG" id="hsa:63971"/>
<dbReference type="MANE-Select" id="ENST00000259711.11">
    <property type="protein sequence ID" value="ENSP00000259711.6"/>
    <property type="RefSeq nucleotide sequence ID" value="NM_022113.6"/>
    <property type="RefSeq protein sequence ID" value="NP_071396.4"/>
</dbReference>
<dbReference type="UCSC" id="uc003ncf.4">
    <molecule id="Q9H1H9-1"/>
    <property type="organism name" value="human"/>
</dbReference>
<dbReference type="AGR" id="HGNC:14566"/>
<dbReference type="CTD" id="63971"/>
<dbReference type="DisGeNET" id="63971"/>
<dbReference type="GeneCards" id="KIF13A"/>
<dbReference type="HGNC" id="HGNC:14566">
    <property type="gene designation" value="KIF13A"/>
</dbReference>
<dbReference type="HPA" id="ENSG00000137177">
    <property type="expression patterns" value="Tissue enhanced (skeletal)"/>
</dbReference>
<dbReference type="MIM" id="605433">
    <property type="type" value="gene"/>
</dbReference>
<dbReference type="neXtProt" id="NX_Q9H1H9"/>
<dbReference type="OpenTargets" id="ENSG00000137177"/>
<dbReference type="PharmGKB" id="PA30098"/>
<dbReference type="VEuPathDB" id="HostDB:ENSG00000137177"/>
<dbReference type="eggNOG" id="KOG0241">
    <property type="taxonomic scope" value="Eukaryota"/>
</dbReference>
<dbReference type="GeneTree" id="ENSGT00940000157508"/>
<dbReference type="HOGENOM" id="CLU_001485_29_2_1"/>
<dbReference type="InParanoid" id="Q9H1H9"/>
<dbReference type="OMA" id="GQENHNL"/>
<dbReference type="OrthoDB" id="3176171at2759"/>
<dbReference type="PAN-GO" id="Q9H1H9">
    <property type="GO annotations" value="7 GO annotations based on evolutionary models"/>
</dbReference>
<dbReference type="PhylomeDB" id="Q9H1H9"/>
<dbReference type="TreeFam" id="TF105221"/>
<dbReference type="PathwayCommons" id="Q9H1H9"/>
<dbReference type="Reactome" id="R-HSA-390471">
    <property type="pathway name" value="Association of TriC/CCT with target proteins during biosynthesis"/>
</dbReference>
<dbReference type="SignaLink" id="Q9H1H9"/>
<dbReference type="SIGNOR" id="Q9H1H9"/>
<dbReference type="BioGRID-ORCS" id="63971">
    <property type="hits" value="16 hits in 1164 CRISPR screens"/>
</dbReference>
<dbReference type="ChiTaRS" id="KIF13A">
    <property type="organism name" value="human"/>
</dbReference>
<dbReference type="GeneWiki" id="KIF13A"/>
<dbReference type="GenomeRNAi" id="63971"/>
<dbReference type="Pharos" id="Q9H1H9">
    <property type="development level" value="Tbio"/>
</dbReference>
<dbReference type="PRO" id="PR:Q9H1H9"/>
<dbReference type="Proteomes" id="UP000005640">
    <property type="component" value="Chromosome 6"/>
</dbReference>
<dbReference type="RNAct" id="Q9H1H9">
    <property type="molecule type" value="protein"/>
</dbReference>
<dbReference type="Bgee" id="ENSG00000137177">
    <property type="expression patterns" value="Expressed in tendon of biceps brachii and 192 other cell types or tissues"/>
</dbReference>
<dbReference type="ExpressionAtlas" id="Q9H1H9">
    <property type="expression patterns" value="baseline and differential"/>
</dbReference>
<dbReference type="GO" id="GO:0005813">
    <property type="term" value="C:centrosome"/>
    <property type="evidence" value="ECO:0000314"/>
    <property type="project" value="UniProtKB"/>
</dbReference>
<dbReference type="GO" id="GO:0005737">
    <property type="term" value="C:cytoplasm"/>
    <property type="evidence" value="ECO:0000318"/>
    <property type="project" value="GO_Central"/>
</dbReference>
<dbReference type="GO" id="GO:0010008">
    <property type="term" value="C:endosome membrane"/>
    <property type="evidence" value="ECO:0000314"/>
    <property type="project" value="UniProtKB"/>
</dbReference>
<dbReference type="GO" id="GO:0000139">
    <property type="term" value="C:Golgi membrane"/>
    <property type="evidence" value="ECO:0007669"/>
    <property type="project" value="UniProtKB-SubCell"/>
</dbReference>
<dbReference type="GO" id="GO:0005871">
    <property type="term" value="C:kinesin complex"/>
    <property type="evidence" value="ECO:0000318"/>
    <property type="project" value="GO_Central"/>
</dbReference>
<dbReference type="GO" id="GO:0005874">
    <property type="term" value="C:microtubule"/>
    <property type="evidence" value="ECO:0000318"/>
    <property type="project" value="GO_Central"/>
</dbReference>
<dbReference type="GO" id="GO:0030496">
    <property type="term" value="C:midbody"/>
    <property type="evidence" value="ECO:0000314"/>
    <property type="project" value="UniProtKB"/>
</dbReference>
<dbReference type="GO" id="GO:0032588">
    <property type="term" value="C:trans-Golgi network membrane"/>
    <property type="evidence" value="ECO:0000250"/>
    <property type="project" value="UniProtKB"/>
</dbReference>
<dbReference type="GO" id="GO:0005524">
    <property type="term" value="F:ATP binding"/>
    <property type="evidence" value="ECO:0007669"/>
    <property type="project" value="UniProtKB-KW"/>
</dbReference>
<dbReference type="GO" id="GO:0016887">
    <property type="term" value="F:ATP hydrolysis activity"/>
    <property type="evidence" value="ECO:0000318"/>
    <property type="project" value="GO_Central"/>
</dbReference>
<dbReference type="GO" id="GO:0008017">
    <property type="term" value="F:microtubule binding"/>
    <property type="evidence" value="ECO:0000318"/>
    <property type="project" value="GO_Central"/>
</dbReference>
<dbReference type="GO" id="GO:0003777">
    <property type="term" value="F:microtubule motor activity"/>
    <property type="evidence" value="ECO:0000250"/>
    <property type="project" value="UniProtKB"/>
</dbReference>
<dbReference type="GO" id="GO:0051301">
    <property type="term" value="P:cell division"/>
    <property type="evidence" value="ECO:0007669"/>
    <property type="project" value="UniProtKB-KW"/>
</dbReference>
<dbReference type="GO" id="GO:0008333">
    <property type="term" value="P:endosome to lysosome transport"/>
    <property type="evidence" value="ECO:0000315"/>
    <property type="project" value="UniProtKB"/>
</dbReference>
<dbReference type="GO" id="GO:0043001">
    <property type="term" value="P:Golgi to plasma membrane protein transport"/>
    <property type="evidence" value="ECO:0000250"/>
    <property type="project" value="UniProtKB"/>
</dbReference>
<dbReference type="GO" id="GO:0006886">
    <property type="term" value="P:intracellular protein transport"/>
    <property type="evidence" value="ECO:0000315"/>
    <property type="project" value="UniProtKB"/>
</dbReference>
<dbReference type="GO" id="GO:0032438">
    <property type="term" value="P:melanosome organization"/>
    <property type="evidence" value="ECO:0000315"/>
    <property type="project" value="UniProtKB"/>
</dbReference>
<dbReference type="GO" id="GO:0007018">
    <property type="term" value="P:microtubule-based movement"/>
    <property type="evidence" value="ECO:0000318"/>
    <property type="project" value="GO_Central"/>
</dbReference>
<dbReference type="GO" id="GO:0072383">
    <property type="term" value="P:plus-end-directed vesicle transport along microtubule"/>
    <property type="evidence" value="ECO:0000250"/>
    <property type="project" value="UniProtKB"/>
</dbReference>
<dbReference type="GO" id="GO:0032465">
    <property type="term" value="P:regulation of cytokinesis"/>
    <property type="evidence" value="ECO:0000315"/>
    <property type="project" value="UniProtKB"/>
</dbReference>
<dbReference type="GO" id="GO:0035459">
    <property type="term" value="P:vesicle cargo loading"/>
    <property type="evidence" value="ECO:0000315"/>
    <property type="project" value="UniProtKB"/>
</dbReference>
<dbReference type="CDD" id="cd22729">
    <property type="entry name" value="FHA_KIF13A"/>
    <property type="match status" value="1"/>
</dbReference>
<dbReference type="CDD" id="cd01365">
    <property type="entry name" value="KISc_KIF1A_KIF1B"/>
    <property type="match status" value="1"/>
</dbReference>
<dbReference type="FunFam" id="2.60.200.20:FF:000002">
    <property type="entry name" value="Kinesin family member 13A"/>
    <property type="match status" value="1"/>
</dbReference>
<dbReference type="FunFam" id="3.40.850.10:FF:000010">
    <property type="entry name" value="Kinesin family member 13A"/>
    <property type="match status" value="1"/>
</dbReference>
<dbReference type="Gene3D" id="2.60.200.20">
    <property type="match status" value="1"/>
</dbReference>
<dbReference type="Gene3D" id="6.10.250.2520">
    <property type="match status" value="1"/>
</dbReference>
<dbReference type="Gene3D" id="3.40.850.10">
    <property type="entry name" value="Kinesin motor domain"/>
    <property type="match status" value="1"/>
</dbReference>
<dbReference type="InterPro" id="IPR000253">
    <property type="entry name" value="FHA_dom"/>
</dbReference>
<dbReference type="InterPro" id="IPR022164">
    <property type="entry name" value="Kinesin-like"/>
</dbReference>
<dbReference type="InterPro" id="IPR022140">
    <property type="entry name" value="Kinesin-like_KIF1-typ"/>
</dbReference>
<dbReference type="InterPro" id="IPR032405">
    <property type="entry name" value="Kinesin_assoc"/>
</dbReference>
<dbReference type="InterPro" id="IPR019821">
    <property type="entry name" value="Kinesin_motor_CS"/>
</dbReference>
<dbReference type="InterPro" id="IPR001752">
    <property type="entry name" value="Kinesin_motor_dom"/>
</dbReference>
<dbReference type="InterPro" id="IPR036961">
    <property type="entry name" value="Kinesin_motor_dom_sf"/>
</dbReference>
<dbReference type="InterPro" id="IPR027417">
    <property type="entry name" value="P-loop_NTPase"/>
</dbReference>
<dbReference type="InterPro" id="IPR008984">
    <property type="entry name" value="SMAD_FHA_dom_sf"/>
</dbReference>
<dbReference type="PANTHER" id="PTHR47117">
    <property type="entry name" value="STAR-RELATED LIPID TRANSFER PROTEIN 9"/>
    <property type="match status" value="1"/>
</dbReference>
<dbReference type="Pfam" id="PF12473">
    <property type="entry name" value="DUF3694"/>
    <property type="match status" value="1"/>
</dbReference>
<dbReference type="Pfam" id="PF00498">
    <property type="entry name" value="FHA"/>
    <property type="match status" value="1"/>
</dbReference>
<dbReference type="Pfam" id="PF12423">
    <property type="entry name" value="KIF1B"/>
    <property type="match status" value="1"/>
</dbReference>
<dbReference type="Pfam" id="PF00225">
    <property type="entry name" value="Kinesin"/>
    <property type="match status" value="1"/>
</dbReference>
<dbReference type="Pfam" id="PF16183">
    <property type="entry name" value="Kinesin_assoc"/>
    <property type="match status" value="1"/>
</dbReference>
<dbReference type="PRINTS" id="PR00380">
    <property type="entry name" value="KINESINHEAVY"/>
</dbReference>
<dbReference type="SMART" id="SM00129">
    <property type="entry name" value="KISc"/>
    <property type="match status" value="1"/>
</dbReference>
<dbReference type="SUPFAM" id="SSF52540">
    <property type="entry name" value="P-loop containing nucleoside triphosphate hydrolases"/>
    <property type="match status" value="1"/>
</dbReference>
<dbReference type="SUPFAM" id="SSF49879">
    <property type="entry name" value="SMAD/FHA domain"/>
    <property type="match status" value="1"/>
</dbReference>
<dbReference type="PROSITE" id="PS00411">
    <property type="entry name" value="KINESIN_MOTOR_1"/>
    <property type="match status" value="1"/>
</dbReference>
<dbReference type="PROSITE" id="PS50067">
    <property type="entry name" value="KINESIN_MOTOR_2"/>
    <property type="match status" value="1"/>
</dbReference>
<keyword id="KW-0025">Alternative splicing</keyword>
<keyword id="KW-0067">ATP-binding</keyword>
<keyword id="KW-0131">Cell cycle</keyword>
<keyword id="KW-0132">Cell division</keyword>
<keyword id="KW-0175">Coiled coil</keyword>
<keyword id="KW-0963">Cytoplasm</keyword>
<keyword id="KW-0206">Cytoskeleton</keyword>
<keyword id="KW-0967">Endosome</keyword>
<keyword id="KW-0333">Golgi apparatus</keyword>
<keyword id="KW-0472">Membrane</keyword>
<keyword id="KW-0493">Microtubule</keyword>
<keyword id="KW-0505">Motor protein</keyword>
<keyword id="KW-0547">Nucleotide-binding</keyword>
<keyword id="KW-0597">Phosphoprotein</keyword>
<keyword id="KW-0653">Protein transport</keyword>
<keyword id="KW-1267">Proteomics identification</keyword>
<keyword id="KW-1185">Reference proteome</keyword>
<keyword id="KW-0813">Transport</keyword>
<evidence type="ECO:0000250" key="1"/>
<evidence type="ECO:0000250" key="2">
    <source>
        <dbReference type="UniProtKB" id="Q9EQW7"/>
    </source>
</evidence>
<evidence type="ECO:0000255" key="3"/>
<evidence type="ECO:0000255" key="4">
    <source>
        <dbReference type="PROSITE-ProRule" id="PRU00283"/>
    </source>
</evidence>
<evidence type="ECO:0000256" key="5">
    <source>
        <dbReference type="SAM" id="MobiDB-lite"/>
    </source>
</evidence>
<evidence type="ECO:0000269" key="6">
    <source>
    </source>
</evidence>
<evidence type="ECO:0000269" key="7">
    <source>
    </source>
</evidence>
<evidence type="ECO:0000269" key="8">
    <source>
    </source>
</evidence>
<evidence type="ECO:0000269" key="9">
    <source>
    </source>
</evidence>
<evidence type="ECO:0000303" key="10">
    <source>
    </source>
</evidence>
<evidence type="ECO:0000303" key="11">
    <source>
    </source>
</evidence>
<evidence type="ECO:0000303" key="12">
    <source>
    </source>
</evidence>
<evidence type="ECO:0000305" key="13"/>
<evidence type="ECO:0007744" key="14">
    <source>
    </source>
</evidence>
<evidence type="ECO:0007744" key="15">
    <source>
    </source>
</evidence>
<evidence type="ECO:0007744" key="16">
    <source>
    </source>
</evidence>